<protein>
    <recommendedName>
        <fullName>Polygalacturonase inhibitor 1</fullName>
    </recommendedName>
    <alternativeName>
        <fullName>Polygalacturonase-inhibiting protein 1</fullName>
        <shortName>PGIP-1</shortName>
    </alternativeName>
</protein>
<gene>
    <name type="primary">PGIP1</name>
    <name type="ordered locus">At5g06860</name>
    <name type="ORF">MOJ9_3</name>
</gene>
<accession>Q9M5J9</accession>
<reference key="1">
    <citation type="submission" date="2000-01" db="EMBL/GenBank/DDBJ databases">
        <title>Arabidopsis thaliana polygalacturonase inhibiting protein 1 (PGIP1) gene.</title>
        <authorList>
            <person name="Park B."/>
            <person name="Jin Y."/>
            <person name="Nam S."/>
            <person name="Kim H."/>
        </authorList>
    </citation>
    <scope>NUCLEOTIDE SEQUENCE [MRNA]</scope>
</reference>
<reference key="2">
    <citation type="journal article" date="1998" name="DNA Res.">
        <title>Structural analysis of Arabidopsis thaliana chromosome 5. V. Sequence features of the regions of 1,381,565 bp covered by twenty one physically assigned P1 and TAC clones.</title>
        <authorList>
            <person name="Kaneko T."/>
            <person name="Kotani H."/>
            <person name="Nakamura Y."/>
            <person name="Sato S."/>
            <person name="Asamizu E."/>
            <person name="Miyajima N."/>
            <person name="Tabata S."/>
        </authorList>
    </citation>
    <scope>NUCLEOTIDE SEQUENCE [LARGE SCALE GENOMIC DNA]</scope>
    <source>
        <strain>cv. Columbia</strain>
    </source>
</reference>
<reference key="3">
    <citation type="journal article" date="2017" name="Plant J.">
        <title>Araport11: a complete reannotation of the Arabidopsis thaliana reference genome.</title>
        <authorList>
            <person name="Cheng C.Y."/>
            <person name="Krishnakumar V."/>
            <person name="Chan A.P."/>
            <person name="Thibaud-Nissen F."/>
            <person name="Schobel S."/>
            <person name="Town C.D."/>
        </authorList>
    </citation>
    <scope>GENOME REANNOTATION</scope>
    <source>
        <strain>cv. Columbia</strain>
    </source>
</reference>
<reference key="4">
    <citation type="journal article" date="2003" name="Science">
        <title>Empirical analysis of transcriptional activity in the Arabidopsis genome.</title>
        <authorList>
            <person name="Yamada K."/>
            <person name="Lim J."/>
            <person name="Dale J.M."/>
            <person name="Chen H."/>
            <person name="Shinn P."/>
            <person name="Palm C.J."/>
            <person name="Southwick A.M."/>
            <person name="Wu H.C."/>
            <person name="Kim C.J."/>
            <person name="Nguyen M."/>
            <person name="Pham P.K."/>
            <person name="Cheuk R.F."/>
            <person name="Karlin-Newmann G."/>
            <person name="Liu S.X."/>
            <person name="Lam B."/>
            <person name="Sakano H."/>
            <person name="Wu T."/>
            <person name="Yu G."/>
            <person name="Miranda M."/>
            <person name="Quach H.L."/>
            <person name="Tripp M."/>
            <person name="Chang C.H."/>
            <person name="Lee J.M."/>
            <person name="Toriumi M.J."/>
            <person name="Chan M.M."/>
            <person name="Tang C.C."/>
            <person name="Onodera C.S."/>
            <person name="Deng J.M."/>
            <person name="Akiyama K."/>
            <person name="Ansari Y."/>
            <person name="Arakawa T."/>
            <person name="Banh J."/>
            <person name="Banno F."/>
            <person name="Bowser L."/>
            <person name="Brooks S.Y."/>
            <person name="Carninci P."/>
            <person name="Chao Q."/>
            <person name="Choy N."/>
            <person name="Enju A."/>
            <person name="Goldsmith A.D."/>
            <person name="Gurjal M."/>
            <person name="Hansen N.F."/>
            <person name="Hayashizaki Y."/>
            <person name="Johnson-Hopson C."/>
            <person name="Hsuan V.W."/>
            <person name="Iida K."/>
            <person name="Karnes M."/>
            <person name="Khan S."/>
            <person name="Koesema E."/>
            <person name="Ishida J."/>
            <person name="Jiang P.X."/>
            <person name="Jones T."/>
            <person name="Kawai J."/>
            <person name="Kamiya A."/>
            <person name="Meyers C."/>
            <person name="Nakajima M."/>
            <person name="Narusaka M."/>
            <person name="Seki M."/>
            <person name="Sakurai T."/>
            <person name="Satou M."/>
            <person name="Tamse R."/>
            <person name="Vaysberg M."/>
            <person name="Wallender E.K."/>
            <person name="Wong C."/>
            <person name="Yamamura Y."/>
            <person name="Yuan S."/>
            <person name="Shinozaki K."/>
            <person name="Davis R.W."/>
            <person name="Theologis A."/>
            <person name="Ecker J.R."/>
        </authorList>
    </citation>
    <scope>NUCLEOTIDE SEQUENCE [LARGE SCALE MRNA]</scope>
    <source>
        <strain>cv. Columbia</strain>
    </source>
</reference>
<reference key="5">
    <citation type="journal article" date="2007" name="Mol. Cell. Proteomics">
        <title>Multidimensional protein identification technology (MudPIT) analysis of ubiquitinated proteins in plants.</title>
        <authorList>
            <person name="Maor R."/>
            <person name="Jones A."/>
            <person name="Nuehse T.S."/>
            <person name="Studholme D.J."/>
            <person name="Peck S.C."/>
            <person name="Shirasu K."/>
        </authorList>
    </citation>
    <scope>IDENTIFICATION BY MASS SPECTROMETRY [LARGE SCALE ANALYSIS]</scope>
    <source>
        <strain>cv. Landsberg erecta</strain>
    </source>
</reference>
<feature type="signal peptide" evidence="2">
    <location>
        <begin position="1"/>
        <end position="21"/>
    </location>
</feature>
<feature type="chain" id="PRO_0000023882" description="Polygalacturonase inhibitor 1">
    <location>
        <begin position="22"/>
        <end position="330"/>
    </location>
</feature>
<feature type="repeat" description="LRR 1" evidence="2">
    <location>
        <begin position="69"/>
        <end position="93"/>
    </location>
</feature>
<feature type="repeat" description="LRR 2" evidence="2">
    <location>
        <begin position="94"/>
        <end position="117"/>
    </location>
</feature>
<feature type="repeat" description="LRR 3" evidence="2">
    <location>
        <begin position="118"/>
        <end position="142"/>
    </location>
</feature>
<feature type="repeat" description="LRR 4" evidence="2">
    <location>
        <begin position="143"/>
        <end position="166"/>
    </location>
</feature>
<feature type="repeat" description="LRR 5" evidence="2">
    <location>
        <begin position="167"/>
        <end position="189"/>
    </location>
</feature>
<feature type="repeat" description="LRR 6" evidence="2">
    <location>
        <begin position="191"/>
        <end position="215"/>
    </location>
</feature>
<feature type="repeat" description="LRR 7" evidence="2">
    <location>
        <begin position="217"/>
        <end position="237"/>
    </location>
</feature>
<feature type="repeat" description="LRR 8" evidence="2">
    <location>
        <begin position="238"/>
        <end position="260"/>
    </location>
</feature>
<feature type="repeat" description="LRR 9" evidence="2">
    <location>
        <begin position="261"/>
        <end position="285"/>
    </location>
</feature>
<feature type="repeat" description="LRR 10" evidence="2">
    <location>
        <begin position="287"/>
        <end position="309"/>
    </location>
</feature>
<feature type="glycosylation site" description="N-linked (GlcNAc...) asparagine" evidence="3">
    <location>
        <position position="106"/>
    </location>
</feature>
<feature type="glycosylation site" description="N-linked (GlcNAc...) asparagine" evidence="3">
    <location>
        <position position="130"/>
    </location>
</feature>
<feature type="glycosylation site" description="N-linked (GlcNAc...) asparagine" evidence="3">
    <location>
        <position position="238"/>
    </location>
</feature>
<feature type="glycosylation site" description="N-linked (GlcNAc...) asparagine" evidence="3">
    <location>
        <position position="291"/>
    </location>
</feature>
<feature type="disulfide bond" evidence="1">
    <location>
        <begin position="25"/>
        <end position="55"/>
    </location>
</feature>
<feature type="disulfide bond" evidence="1">
    <location>
        <begin position="56"/>
        <end position="63"/>
    </location>
</feature>
<feature type="disulfide bond" evidence="1">
    <location>
        <begin position="298"/>
        <end position="320"/>
    </location>
</feature>
<feature type="disulfide bond" evidence="1">
    <location>
        <begin position="322"/>
        <end position="329"/>
    </location>
</feature>
<comment type="function">
    <text evidence="1">Inhibitor of fungal polygalacturonase. It is an important factor for plant resistance to phytopathogenic fungi.</text>
</comment>
<comment type="subcellular location">
    <subcellularLocation>
        <location evidence="1">Secreted</location>
        <location evidence="1">Cell wall</location>
    </subcellularLocation>
    <subcellularLocation>
        <location>Membrane</location>
        <topology>Peripheral membrane protein</topology>
    </subcellularLocation>
</comment>
<comment type="similarity">
    <text evidence="4">Belongs to the polygalacturonase-inhibiting protein family.</text>
</comment>
<keyword id="KW-0134">Cell wall</keyword>
<keyword id="KW-1015">Disulfide bond</keyword>
<keyword id="KW-0325">Glycoprotein</keyword>
<keyword id="KW-0433">Leucine-rich repeat</keyword>
<keyword id="KW-0472">Membrane</keyword>
<keyword id="KW-1185">Reference proteome</keyword>
<keyword id="KW-0677">Repeat</keyword>
<keyword id="KW-0964">Secreted</keyword>
<keyword id="KW-0732">Signal</keyword>
<sequence length="330" mass="36689">MDKTATLCLLFLFTFLTTCLSKDLCNQNDKNTLLKIKKSLNNPYHLASWDPQTDCCSWYCLECGDATVNHRVTALTIFSGQISGQIPAEVGDLPYLETLVFRKLSNLTGTIQPTIAKLKNLRMLRLSWTNLTGPIPDFISQLKNLEFLELSFNDLSGSIPSSLSTLPKILALELSRNKLTGSIPESFGSFPGTVPDLRLSHNQLSGPIPKSLGNIDFNRIDLSRNKLQGDASMLFGSNKTTWSIDLSRNMFQFDISKVDIPKTLGILDLNHNGITGNIPVQWTEAPLQFFNVSYNKLCGHIPTGGKLQTFDSYSYFHNKCLCGAPLEICK</sequence>
<name>PGIP1_ARATH</name>
<organism>
    <name type="scientific">Arabidopsis thaliana</name>
    <name type="common">Mouse-ear cress</name>
    <dbReference type="NCBI Taxonomy" id="3702"/>
    <lineage>
        <taxon>Eukaryota</taxon>
        <taxon>Viridiplantae</taxon>
        <taxon>Streptophyta</taxon>
        <taxon>Embryophyta</taxon>
        <taxon>Tracheophyta</taxon>
        <taxon>Spermatophyta</taxon>
        <taxon>Magnoliopsida</taxon>
        <taxon>eudicotyledons</taxon>
        <taxon>Gunneridae</taxon>
        <taxon>Pentapetalae</taxon>
        <taxon>rosids</taxon>
        <taxon>malvids</taxon>
        <taxon>Brassicales</taxon>
        <taxon>Brassicaceae</taxon>
        <taxon>Camelineae</taxon>
        <taxon>Arabidopsis</taxon>
    </lineage>
</organism>
<dbReference type="EMBL" id="AF229249">
    <property type="protein sequence ID" value="AAF69827.1"/>
    <property type="molecule type" value="mRNA"/>
</dbReference>
<dbReference type="EMBL" id="AB010697">
    <property type="protein sequence ID" value="BAB11144.1"/>
    <property type="molecule type" value="Genomic_DNA"/>
</dbReference>
<dbReference type="EMBL" id="CP002688">
    <property type="protein sequence ID" value="AED91076.1"/>
    <property type="molecule type" value="Genomic_DNA"/>
</dbReference>
<dbReference type="EMBL" id="AY048295">
    <property type="protein sequence ID" value="AAK82557.1"/>
    <property type="molecule type" value="mRNA"/>
</dbReference>
<dbReference type="EMBL" id="AY133567">
    <property type="protein sequence ID" value="AAM91397.1"/>
    <property type="molecule type" value="mRNA"/>
</dbReference>
<dbReference type="RefSeq" id="NP_196304.1">
    <property type="nucleotide sequence ID" value="NM_120769.2"/>
</dbReference>
<dbReference type="SMR" id="Q9M5J9"/>
<dbReference type="BioGRID" id="15856">
    <property type="interactions" value="1"/>
</dbReference>
<dbReference type="FunCoup" id="Q9M5J9">
    <property type="interactions" value="704"/>
</dbReference>
<dbReference type="IntAct" id="Q9M5J9">
    <property type="interactions" value="2"/>
</dbReference>
<dbReference type="STRING" id="3702.Q9M5J9"/>
<dbReference type="GlyCosmos" id="Q9M5J9">
    <property type="glycosylation" value="4 sites, No reported glycans"/>
</dbReference>
<dbReference type="GlyGen" id="Q9M5J9">
    <property type="glycosylation" value="4 sites"/>
</dbReference>
<dbReference type="iPTMnet" id="Q9M5J9"/>
<dbReference type="PaxDb" id="3702-AT5G06860.1"/>
<dbReference type="ProteomicsDB" id="235097"/>
<dbReference type="EnsemblPlants" id="AT5G06860.1">
    <property type="protein sequence ID" value="AT5G06860.1"/>
    <property type="gene ID" value="AT5G06860"/>
</dbReference>
<dbReference type="GeneID" id="830577"/>
<dbReference type="Gramene" id="AT5G06860.1">
    <property type="protein sequence ID" value="AT5G06860.1"/>
    <property type="gene ID" value="AT5G06860"/>
</dbReference>
<dbReference type="KEGG" id="ath:AT5G06860"/>
<dbReference type="Araport" id="AT5G06860"/>
<dbReference type="TAIR" id="AT5G06860">
    <property type="gene designation" value="PGIP1"/>
</dbReference>
<dbReference type="eggNOG" id="ENOG502QRQP">
    <property type="taxonomic scope" value="Eukaryota"/>
</dbReference>
<dbReference type="HOGENOM" id="CLU_000288_18_22_1"/>
<dbReference type="InParanoid" id="Q9M5J9"/>
<dbReference type="OMA" id="APLEICK"/>
<dbReference type="PhylomeDB" id="Q9M5J9"/>
<dbReference type="CD-CODE" id="4299E36E">
    <property type="entry name" value="Nucleolus"/>
</dbReference>
<dbReference type="PRO" id="PR:Q9M5J9"/>
<dbReference type="Proteomes" id="UP000006548">
    <property type="component" value="Chromosome 5"/>
</dbReference>
<dbReference type="ExpressionAtlas" id="Q9M5J9">
    <property type="expression patterns" value="baseline and differential"/>
</dbReference>
<dbReference type="GO" id="GO:0005576">
    <property type="term" value="C:extracellular region"/>
    <property type="evidence" value="ECO:0007669"/>
    <property type="project" value="UniProtKB-KW"/>
</dbReference>
<dbReference type="GO" id="GO:0005794">
    <property type="term" value="C:Golgi apparatus"/>
    <property type="evidence" value="ECO:0007005"/>
    <property type="project" value="TAIR"/>
</dbReference>
<dbReference type="GO" id="GO:0016020">
    <property type="term" value="C:membrane"/>
    <property type="evidence" value="ECO:0007669"/>
    <property type="project" value="UniProtKB-SubCell"/>
</dbReference>
<dbReference type="GO" id="GO:0009505">
    <property type="term" value="C:plant-type cell wall"/>
    <property type="evidence" value="ECO:0007005"/>
    <property type="project" value="TAIR"/>
</dbReference>
<dbReference type="GO" id="GO:0009506">
    <property type="term" value="C:plasmodesma"/>
    <property type="evidence" value="ECO:0007005"/>
    <property type="project" value="TAIR"/>
</dbReference>
<dbReference type="GO" id="GO:0099503">
    <property type="term" value="C:secretory vesicle"/>
    <property type="evidence" value="ECO:0007005"/>
    <property type="project" value="TAIR"/>
</dbReference>
<dbReference type="GO" id="GO:0090353">
    <property type="term" value="F:polygalacturonase inhibitor activity"/>
    <property type="evidence" value="ECO:0000314"/>
    <property type="project" value="TAIR"/>
</dbReference>
<dbReference type="FunFam" id="3.80.10.10:FF:000348">
    <property type="entry name" value="Polygalacturonase inhibitor 1"/>
    <property type="match status" value="1"/>
</dbReference>
<dbReference type="Gene3D" id="3.80.10.10">
    <property type="entry name" value="Ribonuclease Inhibitor"/>
    <property type="match status" value="1"/>
</dbReference>
<dbReference type="InterPro" id="IPR001611">
    <property type="entry name" value="Leu-rich_rpt"/>
</dbReference>
<dbReference type="InterPro" id="IPR032675">
    <property type="entry name" value="LRR_dom_sf"/>
</dbReference>
<dbReference type="InterPro" id="IPR013210">
    <property type="entry name" value="LRR_N_plant-typ"/>
</dbReference>
<dbReference type="InterPro" id="IPR051848">
    <property type="entry name" value="PGIP"/>
</dbReference>
<dbReference type="PANTHER" id="PTHR48059">
    <property type="entry name" value="POLYGALACTURONASE INHIBITOR 1"/>
    <property type="match status" value="1"/>
</dbReference>
<dbReference type="PANTHER" id="PTHR48059:SF4">
    <property type="entry name" value="POLYGALACTURONASE INHIBITOR 1-RELATED"/>
    <property type="match status" value="1"/>
</dbReference>
<dbReference type="Pfam" id="PF00560">
    <property type="entry name" value="LRR_1"/>
    <property type="match status" value="4"/>
</dbReference>
<dbReference type="Pfam" id="PF08263">
    <property type="entry name" value="LRRNT_2"/>
    <property type="match status" value="1"/>
</dbReference>
<dbReference type="SUPFAM" id="SSF52058">
    <property type="entry name" value="L domain-like"/>
    <property type="match status" value="1"/>
</dbReference>
<evidence type="ECO:0000250" key="1">
    <source>
        <dbReference type="UniProtKB" id="P58822"/>
    </source>
</evidence>
<evidence type="ECO:0000255" key="2"/>
<evidence type="ECO:0000255" key="3">
    <source>
        <dbReference type="PROSITE-ProRule" id="PRU00498"/>
    </source>
</evidence>
<evidence type="ECO:0000305" key="4"/>
<proteinExistence type="evidence at protein level"/>